<organism>
    <name type="scientific">Schizosaccharomyces pombe (strain 972 / ATCC 24843)</name>
    <name type="common">Fission yeast</name>
    <dbReference type="NCBI Taxonomy" id="284812"/>
    <lineage>
        <taxon>Eukaryota</taxon>
        <taxon>Fungi</taxon>
        <taxon>Dikarya</taxon>
        <taxon>Ascomycota</taxon>
        <taxon>Taphrinomycotina</taxon>
        <taxon>Schizosaccharomycetes</taxon>
        <taxon>Schizosaccharomycetales</taxon>
        <taxon>Schizosaccharomycetaceae</taxon>
        <taxon>Schizosaccharomyces</taxon>
    </lineage>
</organism>
<evidence type="ECO:0000250" key="1"/>
<evidence type="ECO:0000255" key="2">
    <source>
        <dbReference type="PROSITE-ProRule" id="PRU10135"/>
    </source>
</evidence>
<evidence type="ECO:0000256" key="3">
    <source>
        <dbReference type="SAM" id="MobiDB-lite"/>
    </source>
</evidence>
<evidence type="ECO:0000305" key="4"/>
<proteinExistence type="inferred from homology"/>
<protein>
    <recommendedName>
        <fullName>DNA ligase 1</fullName>
        <ecNumber evidence="2">6.5.1.1</ecNumber>
    </recommendedName>
    <alternativeName>
        <fullName>DNA ligase I</fullName>
    </alternativeName>
    <alternativeName>
        <fullName>Polydeoxyribonucleotide synthase [ATP] 1</fullName>
    </alternativeName>
</protein>
<feature type="chain" id="PRO_0000059585" description="DNA ligase 1">
    <location>
        <begin position="1"/>
        <end position="768"/>
    </location>
</feature>
<feature type="region of interest" description="Disordered" evidence="3">
    <location>
        <begin position="42"/>
        <end position="139"/>
    </location>
</feature>
<feature type="region of interest" description="Interaction with target DNA" evidence="1">
    <location>
        <begin position="309"/>
        <end position="318"/>
    </location>
</feature>
<feature type="region of interest" description="Interaction with target DNA" evidence="1">
    <location>
        <begin position="490"/>
        <end position="492"/>
    </location>
</feature>
<feature type="compositionally biased region" description="Basic and acidic residues" evidence="3">
    <location>
        <begin position="52"/>
        <end position="99"/>
    </location>
</feature>
<feature type="compositionally biased region" description="Low complexity" evidence="3">
    <location>
        <begin position="104"/>
        <end position="124"/>
    </location>
</feature>
<feature type="active site" description="N6-AMP-lysine intermediate" evidence="2">
    <location>
        <position position="416"/>
    </location>
</feature>
<feature type="binding site" evidence="1">
    <location>
        <position position="414"/>
    </location>
    <ligand>
        <name>ATP</name>
        <dbReference type="ChEBI" id="CHEBI:30616"/>
    </ligand>
</feature>
<feature type="binding site" evidence="1">
    <location>
        <position position="421"/>
    </location>
    <ligand>
        <name>ATP</name>
        <dbReference type="ChEBI" id="CHEBI:30616"/>
    </ligand>
</feature>
<feature type="binding site" evidence="1">
    <location>
        <position position="437"/>
    </location>
    <ligand>
        <name>ATP</name>
        <dbReference type="ChEBI" id="CHEBI:30616"/>
    </ligand>
</feature>
<feature type="binding site" evidence="1">
    <location>
        <position position="469"/>
    </location>
    <ligand>
        <name>Mg(2+)</name>
        <dbReference type="ChEBI" id="CHEBI:18420"/>
        <label>1</label>
    </ligand>
</feature>
<feature type="binding site" evidence="1">
    <location>
        <position position="568"/>
    </location>
    <ligand>
        <name>Mg(2+)</name>
        <dbReference type="ChEBI" id="CHEBI:18420"/>
        <label>2</label>
    </ligand>
</feature>
<feature type="binding site" evidence="1">
    <location>
        <position position="573"/>
    </location>
    <ligand>
        <name>ATP</name>
        <dbReference type="ChEBI" id="CHEBI:30616"/>
    </ligand>
</feature>
<feature type="binding site" evidence="1">
    <location>
        <position position="587"/>
    </location>
    <ligand>
        <name>ATP</name>
        <dbReference type="ChEBI" id="CHEBI:30616"/>
    </ligand>
</feature>
<feature type="binding site" evidence="1">
    <location>
        <position position="593"/>
    </location>
    <ligand>
        <name>ATP</name>
        <dbReference type="ChEBI" id="CHEBI:30616"/>
    </ligand>
</feature>
<feature type="site" description="Interaction with target DNA" evidence="1">
    <location>
        <position position="165"/>
    </location>
</feature>
<feature type="site" description="Interaction with target DNA" evidence="1">
    <location>
        <position position="438"/>
    </location>
</feature>
<feature type="site" description="Interaction with target DNA" evidence="1">
    <location>
        <position position="619"/>
    </location>
</feature>
<feature type="site" description="Interaction with target DNA" evidence="1">
    <location>
        <position position="644"/>
    </location>
</feature>
<reference key="1">
    <citation type="journal article" date="1987" name="Eur. J. Biochem.">
        <title>Molecular characterisation of the DNA ligase gene, CDC17, from the fission yeast Schizosaccharomyces pombe.</title>
        <authorList>
            <person name="Barker D.G."/>
            <person name="White J.H.M."/>
            <person name="Johnston L.H."/>
        </authorList>
    </citation>
    <scope>NUCLEOTIDE SEQUENCE [GENOMIC DNA]</scope>
</reference>
<reference key="2">
    <citation type="journal article" date="2002" name="Nature">
        <title>The genome sequence of Schizosaccharomyces pombe.</title>
        <authorList>
            <person name="Wood V."/>
            <person name="Gwilliam R."/>
            <person name="Rajandream M.A."/>
            <person name="Lyne M.H."/>
            <person name="Lyne R."/>
            <person name="Stewart A."/>
            <person name="Sgouros J.G."/>
            <person name="Peat N."/>
            <person name="Hayles J."/>
            <person name="Baker S.G."/>
            <person name="Basham D."/>
            <person name="Bowman S."/>
            <person name="Brooks K."/>
            <person name="Brown D."/>
            <person name="Brown S."/>
            <person name="Chillingworth T."/>
            <person name="Churcher C.M."/>
            <person name="Collins M."/>
            <person name="Connor R."/>
            <person name="Cronin A."/>
            <person name="Davis P."/>
            <person name="Feltwell T."/>
            <person name="Fraser A."/>
            <person name="Gentles S."/>
            <person name="Goble A."/>
            <person name="Hamlin N."/>
            <person name="Harris D.E."/>
            <person name="Hidalgo J."/>
            <person name="Hodgson G."/>
            <person name="Holroyd S."/>
            <person name="Hornsby T."/>
            <person name="Howarth S."/>
            <person name="Huckle E.J."/>
            <person name="Hunt S."/>
            <person name="Jagels K."/>
            <person name="James K.D."/>
            <person name="Jones L."/>
            <person name="Jones M."/>
            <person name="Leather S."/>
            <person name="McDonald S."/>
            <person name="McLean J."/>
            <person name="Mooney P."/>
            <person name="Moule S."/>
            <person name="Mungall K.L."/>
            <person name="Murphy L.D."/>
            <person name="Niblett D."/>
            <person name="Odell C."/>
            <person name="Oliver K."/>
            <person name="O'Neil S."/>
            <person name="Pearson D."/>
            <person name="Quail M.A."/>
            <person name="Rabbinowitsch E."/>
            <person name="Rutherford K.M."/>
            <person name="Rutter S."/>
            <person name="Saunders D."/>
            <person name="Seeger K."/>
            <person name="Sharp S."/>
            <person name="Skelton J."/>
            <person name="Simmonds M.N."/>
            <person name="Squares R."/>
            <person name="Squares S."/>
            <person name="Stevens K."/>
            <person name="Taylor K."/>
            <person name="Taylor R.G."/>
            <person name="Tivey A."/>
            <person name="Walsh S.V."/>
            <person name="Warren T."/>
            <person name="Whitehead S."/>
            <person name="Woodward J.R."/>
            <person name="Volckaert G."/>
            <person name="Aert R."/>
            <person name="Robben J."/>
            <person name="Grymonprez B."/>
            <person name="Weltjens I."/>
            <person name="Vanstreels E."/>
            <person name="Rieger M."/>
            <person name="Schaefer M."/>
            <person name="Mueller-Auer S."/>
            <person name="Gabel C."/>
            <person name="Fuchs M."/>
            <person name="Duesterhoeft A."/>
            <person name="Fritzc C."/>
            <person name="Holzer E."/>
            <person name="Moestl D."/>
            <person name="Hilbert H."/>
            <person name="Borzym K."/>
            <person name="Langer I."/>
            <person name="Beck A."/>
            <person name="Lehrach H."/>
            <person name="Reinhardt R."/>
            <person name="Pohl T.M."/>
            <person name="Eger P."/>
            <person name="Zimmermann W."/>
            <person name="Wedler H."/>
            <person name="Wambutt R."/>
            <person name="Purnelle B."/>
            <person name="Goffeau A."/>
            <person name="Cadieu E."/>
            <person name="Dreano S."/>
            <person name="Gloux S."/>
            <person name="Lelaure V."/>
            <person name="Mottier S."/>
            <person name="Galibert F."/>
            <person name="Aves S.J."/>
            <person name="Xiang Z."/>
            <person name="Hunt C."/>
            <person name="Moore K."/>
            <person name="Hurst S.M."/>
            <person name="Lucas M."/>
            <person name="Rochet M."/>
            <person name="Gaillardin C."/>
            <person name="Tallada V.A."/>
            <person name="Garzon A."/>
            <person name="Thode G."/>
            <person name="Daga R.R."/>
            <person name="Cruzado L."/>
            <person name="Jimenez J."/>
            <person name="Sanchez M."/>
            <person name="del Rey F."/>
            <person name="Benito J."/>
            <person name="Dominguez A."/>
            <person name="Revuelta J.L."/>
            <person name="Moreno S."/>
            <person name="Armstrong J."/>
            <person name="Forsburg S.L."/>
            <person name="Cerutti L."/>
            <person name="Lowe T."/>
            <person name="McCombie W.R."/>
            <person name="Paulsen I."/>
            <person name="Potashkin J."/>
            <person name="Shpakovski G.V."/>
            <person name="Ussery D."/>
            <person name="Barrell B.G."/>
            <person name="Nurse P."/>
        </authorList>
    </citation>
    <scope>NUCLEOTIDE SEQUENCE [LARGE SCALE GENOMIC DNA]</scope>
    <source>
        <strain>972 / ATCC 24843</strain>
    </source>
</reference>
<keyword id="KW-0067">ATP-binding</keyword>
<keyword id="KW-0131">Cell cycle</keyword>
<keyword id="KW-0132">Cell division</keyword>
<keyword id="KW-0227">DNA damage</keyword>
<keyword id="KW-0233">DNA recombination</keyword>
<keyword id="KW-0234">DNA repair</keyword>
<keyword id="KW-0235">DNA replication</keyword>
<keyword id="KW-0436">Ligase</keyword>
<keyword id="KW-0460">Magnesium</keyword>
<keyword id="KW-0479">Metal-binding</keyword>
<keyword id="KW-0547">Nucleotide-binding</keyword>
<keyword id="KW-0539">Nucleus</keyword>
<keyword id="KW-1185">Reference proteome</keyword>
<accession>P12000</accession>
<dbReference type="EC" id="6.5.1.1" evidence="2"/>
<dbReference type="EMBL" id="X05107">
    <property type="protein sequence ID" value="CAA28754.1"/>
    <property type="molecule type" value="Genomic_DNA"/>
</dbReference>
<dbReference type="EMBL" id="CU329670">
    <property type="protein sequence ID" value="CAB08176.2"/>
    <property type="molecule type" value="Genomic_DNA"/>
</dbReference>
<dbReference type="PIR" id="A29066">
    <property type="entry name" value="A29066"/>
</dbReference>
<dbReference type="RefSeq" id="NP_593318.2">
    <property type="nucleotide sequence ID" value="NM_001018749.2"/>
</dbReference>
<dbReference type="SMR" id="P12000"/>
<dbReference type="BioGRID" id="278340">
    <property type="interactions" value="21"/>
</dbReference>
<dbReference type="FunCoup" id="P12000">
    <property type="interactions" value="818"/>
</dbReference>
<dbReference type="STRING" id="284812.P12000"/>
<dbReference type="iPTMnet" id="P12000"/>
<dbReference type="PaxDb" id="4896-SPAC20G8.01.1"/>
<dbReference type="EnsemblFungi" id="SPAC20G8.01.1">
    <property type="protein sequence ID" value="SPAC20G8.01.1:pep"/>
    <property type="gene ID" value="SPAC20G8.01"/>
</dbReference>
<dbReference type="GeneID" id="2541849"/>
<dbReference type="KEGG" id="spo:2541849"/>
<dbReference type="PomBase" id="SPAC20G8.01">
    <property type="gene designation" value="cdc17"/>
</dbReference>
<dbReference type="VEuPathDB" id="FungiDB:SPAC20G8.01"/>
<dbReference type="eggNOG" id="KOG0967">
    <property type="taxonomic scope" value="Eukaryota"/>
</dbReference>
<dbReference type="HOGENOM" id="CLU_005138_4_2_1"/>
<dbReference type="InParanoid" id="P12000"/>
<dbReference type="OMA" id="WIKYKRD"/>
<dbReference type="PhylomeDB" id="P12000"/>
<dbReference type="Reactome" id="R-SPO-5358565">
    <property type="pathway name" value="Mismatch repair (MMR) directed by MSH2:MSH6 (MutSalpha)"/>
</dbReference>
<dbReference type="Reactome" id="R-SPO-5358606">
    <property type="pathway name" value="Mismatch repair (MMR) directed by MSH2:MSH3 (MutSbeta)"/>
</dbReference>
<dbReference type="Reactome" id="R-SPO-5651801">
    <property type="pathway name" value="PCNA-Dependent Long Patch Base Excision Repair"/>
</dbReference>
<dbReference type="Reactome" id="R-SPO-6782210">
    <property type="pathway name" value="Gap-filling DNA repair synthesis and ligation in TC-NER"/>
</dbReference>
<dbReference type="Reactome" id="R-SPO-69183">
    <property type="pathway name" value="Processive synthesis on the lagging strand"/>
</dbReference>
<dbReference type="PRO" id="PR:P12000"/>
<dbReference type="Proteomes" id="UP000002485">
    <property type="component" value="Chromosome I"/>
</dbReference>
<dbReference type="GO" id="GO:0005739">
    <property type="term" value="C:mitochondrion"/>
    <property type="evidence" value="ECO:0000314"/>
    <property type="project" value="PomBase"/>
</dbReference>
<dbReference type="GO" id="GO:0043596">
    <property type="term" value="C:nuclear replication fork"/>
    <property type="evidence" value="ECO:0000305"/>
    <property type="project" value="PomBase"/>
</dbReference>
<dbReference type="GO" id="GO:0005634">
    <property type="term" value="C:nucleus"/>
    <property type="evidence" value="ECO:0000314"/>
    <property type="project" value="PomBase"/>
</dbReference>
<dbReference type="GO" id="GO:0005524">
    <property type="term" value="F:ATP binding"/>
    <property type="evidence" value="ECO:0007669"/>
    <property type="project" value="UniProtKB-KW"/>
</dbReference>
<dbReference type="GO" id="GO:0003677">
    <property type="term" value="F:DNA binding"/>
    <property type="evidence" value="ECO:0007669"/>
    <property type="project" value="InterPro"/>
</dbReference>
<dbReference type="GO" id="GO:0003910">
    <property type="term" value="F:DNA ligase (ATP) activity"/>
    <property type="evidence" value="ECO:0000316"/>
    <property type="project" value="PomBase"/>
</dbReference>
<dbReference type="GO" id="GO:0003909">
    <property type="term" value="F:DNA ligase activity"/>
    <property type="evidence" value="ECO:0000314"/>
    <property type="project" value="PomBase"/>
</dbReference>
<dbReference type="GO" id="GO:0046872">
    <property type="term" value="F:metal ion binding"/>
    <property type="evidence" value="ECO:0007669"/>
    <property type="project" value="UniProtKB-KW"/>
</dbReference>
<dbReference type="GO" id="GO:0006284">
    <property type="term" value="P:base-excision repair"/>
    <property type="evidence" value="ECO:0000250"/>
    <property type="project" value="PomBase"/>
</dbReference>
<dbReference type="GO" id="GO:0051301">
    <property type="term" value="P:cell division"/>
    <property type="evidence" value="ECO:0007669"/>
    <property type="project" value="UniProtKB-KW"/>
</dbReference>
<dbReference type="GO" id="GO:0071897">
    <property type="term" value="P:DNA biosynthetic process"/>
    <property type="evidence" value="ECO:0007669"/>
    <property type="project" value="InterPro"/>
</dbReference>
<dbReference type="GO" id="GO:0006310">
    <property type="term" value="P:DNA recombination"/>
    <property type="evidence" value="ECO:0000250"/>
    <property type="project" value="PomBase"/>
</dbReference>
<dbReference type="GO" id="GO:0006281">
    <property type="term" value="P:DNA repair"/>
    <property type="evidence" value="ECO:0000315"/>
    <property type="project" value="PomBase"/>
</dbReference>
<dbReference type="GO" id="GO:0006273">
    <property type="term" value="P:lagging strand elongation"/>
    <property type="evidence" value="ECO:0000318"/>
    <property type="project" value="GO_Central"/>
</dbReference>
<dbReference type="GO" id="GO:0032042">
    <property type="term" value="P:mitochondrial DNA metabolic process"/>
    <property type="evidence" value="ECO:0000305"/>
    <property type="project" value="PomBase"/>
</dbReference>
<dbReference type="GO" id="GO:0006289">
    <property type="term" value="P:nucleotide-excision repair"/>
    <property type="evidence" value="ECO:0000250"/>
    <property type="project" value="PomBase"/>
</dbReference>
<dbReference type="GO" id="GO:1903461">
    <property type="term" value="P:Okazaki fragment processing involved in mitotic DNA replication"/>
    <property type="evidence" value="ECO:0000315"/>
    <property type="project" value="PomBase"/>
</dbReference>
<dbReference type="CDD" id="cd07900">
    <property type="entry name" value="Adenylation_DNA_ligase_I_Euk"/>
    <property type="match status" value="1"/>
</dbReference>
<dbReference type="CDD" id="cd07969">
    <property type="entry name" value="OBF_DNA_ligase_I"/>
    <property type="match status" value="1"/>
</dbReference>
<dbReference type="FunFam" id="1.10.3260.10:FF:000001">
    <property type="entry name" value="DNA ligase"/>
    <property type="match status" value="1"/>
</dbReference>
<dbReference type="FunFam" id="2.40.50.140:FF:000062">
    <property type="entry name" value="DNA ligase"/>
    <property type="match status" value="1"/>
</dbReference>
<dbReference type="FunFam" id="3.30.470.30:FF:000016">
    <property type="entry name" value="DNA ligase"/>
    <property type="match status" value="1"/>
</dbReference>
<dbReference type="Gene3D" id="3.30.1490.70">
    <property type="match status" value="1"/>
</dbReference>
<dbReference type="Gene3D" id="1.10.3260.10">
    <property type="entry name" value="DNA ligase, ATP-dependent, N-terminal domain"/>
    <property type="match status" value="1"/>
</dbReference>
<dbReference type="Gene3D" id="3.30.470.30">
    <property type="entry name" value="DNA ligase/mRNA capping enzyme"/>
    <property type="match status" value="1"/>
</dbReference>
<dbReference type="Gene3D" id="2.40.50.140">
    <property type="entry name" value="Nucleic acid-binding proteins"/>
    <property type="match status" value="1"/>
</dbReference>
<dbReference type="InterPro" id="IPR050191">
    <property type="entry name" value="ATP-dep_DNA_ligase"/>
</dbReference>
<dbReference type="InterPro" id="IPR000977">
    <property type="entry name" value="DNA_ligase_ATP-dep"/>
</dbReference>
<dbReference type="InterPro" id="IPR012309">
    <property type="entry name" value="DNA_ligase_ATP-dep_C"/>
</dbReference>
<dbReference type="InterPro" id="IPR012310">
    <property type="entry name" value="DNA_ligase_ATP-dep_cent"/>
</dbReference>
<dbReference type="InterPro" id="IPR016059">
    <property type="entry name" value="DNA_ligase_ATP-dep_CS"/>
</dbReference>
<dbReference type="InterPro" id="IPR012308">
    <property type="entry name" value="DNA_ligase_ATP-dep_N"/>
</dbReference>
<dbReference type="InterPro" id="IPR036599">
    <property type="entry name" value="DNA_ligase_N_sf"/>
</dbReference>
<dbReference type="InterPro" id="IPR012340">
    <property type="entry name" value="NA-bd_OB-fold"/>
</dbReference>
<dbReference type="NCBIfam" id="TIGR00574">
    <property type="entry name" value="dnl1"/>
    <property type="match status" value="1"/>
</dbReference>
<dbReference type="PANTHER" id="PTHR45674:SF4">
    <property type="entry name" value="DNA LIGASE 1"/>
    <property type="match status" value="1"/>
</dbReference>
<dbReference type="PANTHER" id="PTHR45674">
    <property type="entry name" value="DNA LIGASE 1/3 FAMILY MEMBER"/>
    <property type="match status" value="1"/>
</dbReference>
<dbReference type="Pfam" id="PF04679">
    <property type="entry name" value="DNA_ligase_A_C"/>
    <property type="match status" value="1"/>
</dbReference>
<dbReference type="Pfam" id="PF01068">
    <property type="entry name" value="DNA_ligase_A_M"/>
    <property type="match status" value="1"/>
</dbReference>
<dbReference type="Pfam" id="PF04675">
    <property type="entry name" value="DNA_ligase_A_N"/>
    <property type="match status" value="1"/>
</dbReference>
<dbReference type="SUPFAM" id="SSF117018">
    <property type="entry name" value="ATP-dependent DNA ligase DNA-binding domain"/>
    <property type="match status" value="1"/>
</dbReference>
<dbReference type="SUPFAM" id="SSF56091">
    <property type="entry name" value="DNA ligase/mRNA capping enzyme, catalytic domain"/>
    <property type="match status" value="1"/>
</dbReference>
<dbReference type="SUPFAM" id="SSF50249">
    <property type="entry name" value="Nucleic acid-binding proteins"/>
    <property type="match status" value="1"/>
</dbReference>
<dbReference type="PROSITE" id="PS00697">
    <property type="entry name" value="DNA_LIGASE_A1"/>
    <property type="match status" value="1"/>
</dbReference>
<dbReference type="PROSITE" id="PS00333">
    <property type="entry name" value="DNA_LIGASE_A2"/>
    <property type="match status" value="1"/>
</dbReference>
<dbReference type="PROSITE" id="PS50160">
    <property type="entry name" value="DNA_LIGASE_A3"/>
    <property type="match status" value="1"/>
</dbReference>
<comment type="function">
    <text evidence="1">DNA ligase that seals nicks in double-stranded DNA during DNA replication, DNA recombination and DNA repair.</text>
</comment>
<comment type="catalytic activity">
    <reaction evidence="2">
        <text>ATP + (deoxyribonucleotide)n-3'-hydroxyl + 5'-phospho-(deoxyribonucleotide)m = (deoxyribonucleotide)n+m + AMP + diphosphate.</text>
        <dbReference type="EC" id="6.5.1.1"/>
    </reaction>
</comment>
<comment type="cofactor">
    <cofactor evidence="1">
        <name>Mg(2+)</name>
        <dbReference type="ChEBI" id="CHEBI:18420"/>
    </cofactor>
</comment>
<comment type="subcellular location">
    <subcellularLocation>
        <location>Nucleus</location>
    </subcellularLocation>
</comment>
<comment type="similarity">
    <text evidence="4">Belongs to the ATP-dependent DNA ligase family.</text>
</comment>
<gene>
    <name type="primary">cdc17</name>
    <name type="ORF">SPAC20G8.01</name>
    <name type="ORF">SPAC57A10.13c</name>
</gene>
<name>DNLI1_SCHPO</name>
<sequence>MRTVFSQIPRFKQVNQYIRMSTRQSDISNFFISSASHKSEHVEVSQSSSDSKNVDGRSTSEKRKVESVKLVDESKHNNHDDTGTQNVERENNIVSEAKKQKTLGSSSSSSDAVSSNNDSGASTPIPLPIKEPPLESNARNDKLKGHATFAEMVKAFTKIENTSKRLEIIDIMGTYFFGILRDHPSDLLACVYLSINKLGPDYSGLELGIGESIIMKAIGESTGQTLQQIKLSFHKVGDLGLVAQTSRQNQPTMFKPAALTIPFLFDSLKKIAQMSGNQSQNRKIGVIKRLLSSCEGAEPKYLIRALEGKLRLQLAEKTILVALANATAQYHADKNGEKLSQQDRIEGEQILRDVYCQLPSYDLIVPHLIEHGLGTLRETCKLTPGIPTKPMLAKPTKQISEVLNTFDQAAFTCEYKYDGERAQVHFTEDGKFYVFSRNSENMSVRYPDISVSVSKWKKPDARSFILDCEAVGWDRDENKILPFQKLATRKRKDVKIGDIKVRACLFAFDILYLNGQPLLETPLNERRKLLYSMFQPSTGDFTFAKHSDQKSIESIEEFLEESVKDSCEGLMVKMLEGPDSHYEPSKRSRHWLKVKKDYLSGVGDSLDLIVIGAYYGKGKRTSVYGAFLLGCYDPDTETVQSICKLGTGFSEEHLETFYNQLKDIVISKKKDFYAHSDVPAHQPDVWFEPKYLWEVLAADLSLSPVYKAAIGYVQEDKGISLRFPRFIRIREDKSWEDATTSEQVSEFYRSQVAYSQKEKEGSPAAEDY</sequence>